<accession>Q57910</accession>
<dbReference type="EMBL" id="L77117">
    <property type="protein sequence ID" value="AAB98477.1"/>
    <property type="molecule type" value="Genomic_DNA"/>
</dbReference>
<dbReference type="PIR" id="F64360">
    <property type="entry name" value="F64360"/>
</dbReference>
<dbReference type="SMR" id="Q57910"/>
<dbReference type="FunCoup" id="Q57910">
    <property type="interactions" value="2"/>
</dbReference>
<dbReference type="STRING" id="243232.MJ_0486"/>
<dbReference type="PaxDb" id="243232-MJ_0486"/>
<dbReference type="DNASU" id="1451348"/>
<dbReference type="EnsemblBacteria" id="AAB98477">
    <property type="protein sequence ID" value="AAB98477"/>
    <property type="gene ID" value="MJ_0486"/>
</dbReference>
<dbReference type="KEGG" id="mja:MJ_0486"/>
<dbReference type="eggNOG" id="arCOG01362">
    <property type="taxonomic scope" value="Archaea"/>
</dbReference>
<dbReference type="HOGENOM" id="CLU_060920_0_0_2"/>
<dbReference type="InParanoid" id="Q57910"/>
<dbReference type="PhylomeDB" id="Q57910"/>
<dbReference type="Proteomes" id="UP000000805">
    <property type="component" value="Chromosome"/>
</dbReference>
<dbReference type="GO" id="GO:0051539">
    <property type="term" value="F:4 iron, 4 sulfur cluster binding"/>
    <property type="evidence" value="ECO:0007669"/>
    <property type="project" value="UniProtKB-KW"/>
</dbReference>
<dbReference type="GO" id="GO:0003824">
    <property type="term" value="F:catalytic activity"/>
    <property type="evidence" value="ECO:0007669"/>
    <property type="project" value="InterPro"/>
</dbReference>
<dbReference type="GO" id="GO:0046872">
    <property type="term" value="F:metal ion binding"/>
    <property type="evidence" value="ECO:0007669"/>
    <property type="project" value="UniProtKB-KW"/>
</dbReference>
<dbReference type="CDD" id="cd01335">
    <property type="entry name" value="Radical_SAM"/>
    <property type="match status" value="1"/>
</dbReference>
<dbReference type="Gene3D" id="3.80.30.20">
    <property type="entry name" value="tm_1862 like domain"/>
    <property type="match status" value="1"/>
</dbReference>
<dbReference type="InterPro" id="IPR039661">
    <property type="entry name" value="ELP3"/>
</dbReference>
<dbReference type="InterPro" id="IPR006638">
    <property type="entry name" value="Elp3/MiaA/NifB-like_rSAM"/>
</dbReference>
<dbReference type="InterPro" id="IPR032432">
    <property type="entry name" value="Radical_SAM_C"/>
</dbReference>
<dbReference type="InterPro" id="IPR007197">
    <property type="entry name" value="rSAM"/>
</dbReference>
<dbReference type="InterPro" id="IPR023404">
    <property type="entry name" value="rSAM_horseshoe"/>
</dbReference>
<dbReference type="InterPro" id="IPR005911">
    <property type="entry name" value="YhcC-like"/>
</dbReference>
<dbReference type="NCBIfam" id="TIGR01212">
    <property type="entry name" value="TIGR01212 family radical SAM protein"/>
    <property type="match status" value="1"/>
</dbReference>
<dbReference type="PANTHER" id="PTHR11135">
    <property type="entry name" value="HISTONE ACETYLTRANSFERASE-RELATED"/>
    <property type="match status" value="1"/>
</dbReference>
<dbReference type="PANTHER" id="PTHR11135:SF1">
    <property type="entry name" value="PROTEIN YHCC"/>
    <property type="match status" value="1"/>
</dbReference>
<dbReference type="Pfam" id="PF04055">
    <property type="entry name" value="Radical_SAM"/>
    <property type="match status" value="1"/>
</dbReference>
<dbReference type="Pfam" id="PF16199">
    <property type="entry name" value="Radical_SAM_C"/>
    <property type="match status" value="1"/>
</dbReference>
<dbReference type="SFLD" id="SFLDG01082">
    <property type="entry name" value="B12-binding_domain_containing"/>
    <property type="match status" value="1"/>
</dbReference>
<dbReference type="SFLD" id="SFLDG01086">
    <property type="entry name" value="elongater_protein-like"/>
    <property type="match status" value="1"/>
</dbReference>
<dbReference type="SFLD" id="SFLDS00029">
    <property type="entry name" value="Radical_SAM"/>
    <property type="match status" value="1"/>
</dbReference>
<dbReference type="SFLD" id="SFLDG01091">
    <property type="entry name" value="uncharacterized_CHP01210-like"/>
    <property type="match status" value="1"/>
</dbReference>
<dbReference type="SMART" id="SM00729">
    <property type="entry name" value="Elp3"/>
    <property type="match status" value="1"/>
</dbReference>
<dbReference type="SUPFAM" id="SSF102114">
    <property type="entry name" value="Radical SAM enzymes"/>
    <property type="match status" value="1"/>
</dbReference>
<dbReference type="PROSITE" id="PS51918">
    <property type="entry name" value="RADICAL_SAM"/>
    <property type="match status" value="1"/>
</dbReference>
<proteinExistence type="inferred from homology"/>
<gene>
    <name type="ordered locus">MJ0486</name>
</gene>
<name>Y486_METJA</name>
<reference key="1">
    <citation type="journal article" date="1996" name="Science">
        <title>Complete genome sequence of the methanogenic archaeon, Methanococcus jannaschii.</title>
        <authorList>
            <person name="Bult C.J."/>
            <person name="White O."/>
            <person name="Olsen G.J."/>
            <person name="Zhou L."/>
            <person name="Fleischmann R.D."/>
            <person name="Sutton G.G."/>
            <person name="Blake J.A."/>
            <person name="FitzGerald L.M."/>
            <person name="Clayton R.A."/>
            <person name="Gocayne J.D."/>
            <person name="Kerlavage A.R."/>
            <person name="Dougherty B.A."/>
            <person name="Tomb J.-F."/>
            <person name="Adams M.D."/>
            <person name="Reich C.I."/>
            <person name="Overbeek R."/>
            <person name="Kirkness E.F."/>
            <person name="Weinstock K.G."/>
            <person name="Merrick J.M."/>
            <person name="Glodek A."/>
            <person name="Scott J.L."/>
            <person name="Geoghagen N.S.M."/>
            <person name="Weidman J.F."/>
            <person name="Fuhrmann J.L."/>
            <person name="Nguyen D."/>
            <person name="Utterback T.R."/>
            <person name="Kelley J.M."/>
            <person name="Peterson J.D."/>
            <person name="Sadow P.W."/>
            <person name="Hanna M.C."/>
            <person name="Cotton M.D."/>
            <person name="Roberts K.M."/>
            <person name="Hurst M.A."/>
            <person name="Kaine B.P."/>
            <person name="Borodovsky M."/>
            <person name="Klenk H.-P."/>
            <person name="Fraser C.M."/>
            <person name="Smith H.O."/>
            <person name="Woese C.R."/>
            <person name="Venter J.C."/>
        </authorList>
    </citation>
    <scope>NUCLEOTIDE SEQUENCE [LARGE SCALE GENOMIC DNA]</scope>
    <source>
        <strain>ATCC 43067 / DSM 2661 / JAL-1 / JCM 10045 / NBRC 100440</strain>
    </source>
</reference>
<feature type="chain" id="PRO_0000106893" description="Uncharacterized protein MJ0486">
    <location>
        <begin position="1"/>
        <end position="322"/>
    </location>
</feature>
<feature type="domain" description="Radical SAM core" evidence="2">
    <location>
        <begin position="34"/>
        <end position="286"/>
    </location>
</feature>
<feature type="binding site" evidence="1">
    <location>
        <position position="50"/>
    </location>
    <ligand>
        <name>[4Fe-4S] cluster</name>
        <dbReference type="ChEBI" id="CHEBI:49883"/>
        <note>4Fe-4S-S-AdoMet</note>
    </ligand>
</feature>
<feature type="binding site" evidence="1">
    <location>
        <position position="58"/>
    </location>
    <ligand>
        <name>[4Fe-4S] cluster</name>
        <dbReference type="ChEBI" id="CHEBI:49883"/>
        <note>4Fe-4S-S-AdoMet</note>
    </ligand>
</feature>
<feature type="binding site" evidence="1">
    <location>
        <position position="61"/>
    </location>
    <ligand>
        <name>[4Fe-4S] cluster</name>
        <dbReference type="ChEBI" id="CHEBI:49883"/>
        <note>4Fe-4S-S-AdoMet</note>
    </ligand>
</feature>
<keyword id="KW-0004">4Fe-4S</keyword>
<keyword id="KW-0408">Iron</keyword>
<keyword id="KW-0411">Iron-sulfur</keyword>
<keyword id="KW-0479">Metal-binding</keyword>
<keyword id="KW-1185">Reference proteome</keyword>
<keyword id="KW-0949">S-adenosyl-L-methionine</keyword>
<sequence length="322" mass="37390">MVVIMLNYDDIKIIDEIYSEGYLFAQYGIYIKKKFKQKIFKIPVDIGLGCPHKKNGGCIFCPEMGRPISVKYCSAKIPLKEQIKKQMENQKKKGFKKFYIYFYPGTNTYAPAEKLKEIWDFSLSYKEVIGLSIGTRPDCLEKEKLDILAEYVENGYDIWIDLGVQSMHQKTLEILNRGHDVSDIIKAIKDCHKRGIKVCGHVILGLPGESWKEMMETAKILSLLEIEAVKIYPLVVVKGTKLEEMYWKGEYRTLDENQYISLVCDFLEHLSPYVLIQRLSKDKVPESIKVSPEWYLGRLKIMNKVSEILKKRGTKQGARFFR</sequence>
<comment type="cofactor">
    <cofactor evidence="1">
        <name>[4Fe-4S] cluster</name>
        <dbReference type="ChEBI" id="CHEBI:49883"/>
    </cofactor>
    <text evidence="1">Binds 1 [4Fe-4S] cluster. The cluster is coordinated with 3 cysteines and an exchangeable S-adenosyl-L-methionine.</text>
</comment>
<comment type="similarity">
    <text evidence="3">Belongs to the radical SAM superfamily.</text>
</comment>
<evidence type="ECO:0000250" key="1">
    <source>
        <dbReference type="UniProtKB" id="Q9X0Z6"/>
    </source>
</evidence>
<evidence type="ECO:0000255" key="2">
    <source>
        <dbReference type="PROSITE-ProRule" id="PRU01266"/>
    </source>
</evidence>
<evidence type="ECO:0000305" key="3"/>
<organism>
    <name type="scientific">Methanocaldococcus jannaschii (strain ATCC 43067 / DSM 2661 / JAL-1 / JCM 10045 / NBRC 100440)</name>
    <name type="common">Methanococcus jannaschii</name>
    <dbReference type="NCBI Taxonomy" id="243232"/>
    <lineage>
        <taxon>Archaea</taxon>
        <taxon>Methanobacteriati</taxon>
        <taxon>Methanobacteriota</taxon>
        <taxon>Methanomada group</taxon>
        <taxon>Methanococci</taxon>
        <taxon>Methanococcales</taxon>
        <taxon>Methanocaldococcaceae</taxon>
        <taxon>Methanocaldococcus</taxon>
    </lineage>
</organism>
<protein>
    <recommendedName>
        <fullName evidence="3">Uncharacterized protein MJ0486</fullName>
    </recommendedName>
</protein>